<gene>
    <name type="ORF">PITG_19617</name>
</gene>
<comment type="function">
    <text evidence="4">Effector that enhances P.infestans colonization of Nicotiana benthamiana leaves.</text>
</comment>
<comment type="subcellular location">
    <subcellularLocation>
        <location evidence="4">Secreted</location>
    </subcellularLocation>
    <subcellularLocation>
        <location evidence="4">Host nucleus</location>
    </subcellularLocation>
    <subcellularLocation>
        <location evidence="4">Host cytoplasm</location>
    </subcellularLocation>
</comment>
<comment type="induction">
    <text evidence="2 3">Expression is induced during host plant infection.</text>
</comment>
<comment type="domain">
    <text evidence="7">The RxLR-dEER motif acts to carry the protein into the host cell cytoplasm through binding to cell surface phosphatidylinositol-3-phosphate.</text>
</comment>
<comment type="similarity">
    <text evidence="6">Belongs to the RxLR effector family.</text>
</comment>
<keyword id="KW-1035">Host cytoplasm</keyword>
<keyword id="KW-1048">Host nucleus</keyword>
<keyword id="KW-1185">Reference proteome</keyword>
<keyword id="KW-0964">Secreted</keyword>
<keyword id="KW-0732">Signal</keyword>
<keyword id="KW-0843">Virulence</keyword>
<name>RXLRZ_PHYIT</name>
<protein>
    <recommendedName>
        <fullName evidence="5">RxLR effector protein PITG_19617</fullName>
    </recommendedName>
</protein>
<reference key="1">
    <citation type="journal article" date="2009" name="Nature">
        <title>Genome sequence and analysis of the Irish potato famine pathogen Phytophthora infestans.</title>
        <authorList>
            <consortium name="The Broad Institute Genome Sequencing Platform"/>
            <person name="Haas B.J."/>
            <person name="Kamoun S."/>
            <person name="Zody M.C."/>
            <person name="Jiang R.H."/>
            <person name="Handsaker R.E."/>
            <person name="Cano L.M."/>
            <person name="Grabherr M."/>
            <person name="Kodira C.D."/>
            <person name="Raffaele S."/>
            <person name="Torto-Alalibo T."/>
            <person name="Bozkurt T.O."/>
            <person name="Ah-Fong A.M."/>
            <person name="Alvarado L."/>
            <person name="Anderson V.L."/>
            <person name="Armstrong M.R."/>
            <person name="Avrova A."/>
            <person name="Baxter L."/>
            <person name="Beynon J."/>
            <person name="Boevink P.C."/>
            <person name="Bollmann S.R."/>
            <person name="Bos J.I."/>
            <person name="Bulone V."/>
            <person name="Cai G."/>
            <person name="Cakir C."/>
            <person name="Carrington J.C."/>
            <person name="Chawner M."/>
            <person name="Conti L."/>
            <person name="Costanzo S."/>
            <person name="Ewan R."/>
            <person name="Fahlgren N."/>
            <person name="Fischbach M.A."/>
            <person name="Fugelstad J."/>
            <person name="Gilroy E.M."/>
            <person name="Gnerre S."/>
            <person name="Green P.J."/>
            <person name="Grenville-Briggs L.J."/>
            <person name="Griffith J."/>
            <person name="Grunwald N.J."/>
            <person name="Horn K."/>
            <person name="Horner N.R."/>
            <person name="Hu C.H."/>
            <person name="Huitema E."/>
            <person name="Jeong D.H."/>
            <person name="Jones A.M."/>
            <person name="Jones J.D."/>
            <person name="Jones R.W."/>
            <person name="Karlsson E.K."/>
            <person name="Kunjeti S.G."/>
            <person name="Lamour K."/>
            <person name="Liu Z."/>
            <person name="Ma L."/>
            <person name="Maclean D."/>
            <person name="Chibucos M.C."/>
            <person name="McDonald H."/>
            <person name="McWalters J."/>
            <person name="Meijer H.J."/>
            <person name="Morgan W."/>
            <person name="Morris P.F."/>
            <person name="Munro C.A."/>
            <person name="O'Neill K."/>
            <person name="Ospina-Giraldo M."/>
            <person name="Pinzon A."/>
            <person name="Pritchard L."/>
            <person name="Ramsahoye B."/>
            <person name="Ren Q."/>
            <person name="Restrepo S."/>
            <person name="Roy S."/>
            <person name="Sadanandom A."/>
            <person name="Savidor A."/>
            <person name="Schornack S."/>
            <person name="Schwartz D.C."/>
            <person name="Schumann U.D."/>
            <person name="Schwessinger B."/>
            <person name="Seyer L."/>
            <person name="Sharpe T."/>
            <person name="Silvar C."/>
            <person name="Song J."/>
            <person name="Studholme D.J."/>
            <person name="Sykes S."/>
            <person name="Thines M."/>
            <person name="van de Vondervoort P.J."/>
            <person name="Phuntumart V."/>
            <person name="Wawra S."/>
            <person name="Weide R."/>
            <person name="Win J."/>
            <person name="Young C."/>
            <person name="Zhou S."/>
            <person name="Fry W."/>
            <person name="Meyers B.C."/>
            <person name="van West P."/>
            <person name="Ristaino J."/>
            <person name="Govers F."/>
            <person name="Birch P.R."/>
            <person name="Whisson S.C."/>
            <person name="Judelson H.S."/>
            <person name="Nusbaum C."/>
        </authorList>
    </citation>
    <scope>NUCLEOTIDE SEQUENCE [LARGE SCALE GENOMIC DNA]</scope>
    <scope>INDUCTION</scope>
    <source>
        <strain>T30-4</strain>
    </source>
</reference>
<reference key="2">
    <citation type="journal article" date="2017" name="Front. Plant Sci.">
        <title>Conserved RXLR effector genes of Phytophthora infestans expressed at the early stage of potato infection are suppressive to host defense.</title>
        <authorList>
            <person name="Yin J."/>
            <person name="Gu B."/>
            <person name="Huang G."/>
            <person name="Tian Y."/>
            <person name="Quan J."/>
            <person name="Lindqvist-Kreuze H."/>
            <person name="Shan W."/>
        </authorList>
    </citation>
    <scope>INDUCTION</scope>
    <scope>DOMAIN</scope>
</reference>
<reference key="3">
    <citation type="journal article" date="2019" name="J. Exp. Bot.">
        <title>Phytophthora infestans RXLR effectors act in concert at diverse subcellular locations to enhance host colonization.</title>
        <authorList>
            <person name="Wang S."/>
            <person name="McLellan H."/>
            <person name="Bukharova T."/>
            <person name="He Q."/>
            <person name="Murphy F."/>
            <person name="Shi J."/>
            <person name="Sun S."/>
            <person name="van Weymers P."/>
            <person name="Ren Y."/>
            <person name="Thilliez G."/>
            <person name="Wang H."/>
            <person name="Chen X."/>
            <person name="Engelhardt S."/>
            <person name="Vleeshouwers V."/>
            <person name="Gilroy E.M."/>
            <person name="Whisson S.C."/>
            <person name="Hein I."/>
            <person name="Wang X."/>
            <person name="Tian Z."/>
            <person name="Birch P.R.J."/>
            <person name="Boevink P.C."/>
        </authorList>
    </citation>
    <scope>FUNCTION</scope>
    <scope>SUBCELLULAR LOCATION</scope>
</reference>
<organism>
    <name type="scientific">Phytophthora infestans (strain T30-4)</name>
    <name type="common">Potato late blight agent</name>
    <dbReference type="NCBI Taxonomy" id="403677"/>
    <lineage>
        <taxon>Eukaryota</taxon>
        <taxon>Sar</taxon>
        <taxon>Stramenopiles</taxon>
        <taxon>Oomycota</taxon>
        <taxon>Peronosporales</taxon>
        <taxon>Peronosporaceae</taxon>
        <taxon>Phytophthora</taxon>
    </lineage>
</organism>
<dbReference type="EMBL" id="DS028216">
    <property type="protein sequence ID" value="EEY70316.1"/>
    <property type="molecule type" value="Genomic_DNA"/>
</dbReference>
<dbReference type="RefSeq" id="XP_002996938.1">
    <property type="nucleotide sequence ID" value="XM_002996892.1"/>
</dbReference>
<dbReference type="EnsemblProtists" id="PITG_19617T0">
    <property type="protein sequence ID" value="PITG_19617T0"/>
    <property type="gene ID" value="PITG_19617"/>
</dbReference>
<dbReference type="GeneID" id="9467120"/>
<dbReference type="KEGG" id="pif:PITG_19617"/>
<dbReference type="VEuPathDB" id="FungiDB:PITG_19617"/>
<dbReference type="HOGENOM" id="CLU_138234_1_0_1"/>
<dbReference type="InParanoid" id="D0P0D8"/>
<dbReference type="Proteomes" id="UP000006643">
    <property type="component" value="Partially assembled WGS sequence"/>
</dbReference>
<dbReference type="GO" id="GO:0005576">
    <property type="term" value="C:extracellular region"/>
    <property type="evidence" value="ECO:0007669"/>
    <property type="project" value="UniProtKB-SubCell"/>
</dbReference>
<dbReference type="GO" id="GO:0030430">
    <property type="term" value="C:host cell cytoplasm"/>
    <property type="evidence" value="ECO:0007669"/>
    <property type="project" value="UniProtKB-SubCell"/>
</dbReference>
<dbReference type="GO" id="GO:0042025">
    <property type="term" value="C:host cell nucleus"/>
    <property type="evidence" value="ECO:0007669"/>
    <property type="project" value="UniProtKB-SubCell"/>
</dbReference>
<dbReference type="InterPro" id="IPR031825">
    <property type="entry name" value="RXLR"/>
</dbReference>
<dbReference type="Pfam" id="PF16810">
    <property type="entry name" value="RXLR"/>
    <property type="match status" value="1"/>
</dbReference>
<evidence type="ECO:0000255" key="1"/>
<evidence type="ECO:0000269" key="2">
    <source>
    </source>
</evidence>
<evidence type="ECO:0000269" key="3">
    <source>
    </source>
</evidence>
<evidence type="ECO:0000269" key="4">
    <source>
    </source>
</evidence>
<evidence type="ECO:0000303" key="5">
    <source>
    </source>
</evidence>
<evidence type="ECO:0000305" key="6"/>
<evidence type="ECO:0000305" key="7">
    <source>
    </source>
</evidence>
<accession>D0P0D8</accession>
<proteinExistence type="evidence at transcript level"/>
<feature type="signal peptide" evidence="1">
    <location>
        <begin position="1"/>
        <end position="21"/>
    </location>
</feature>
<feature type="chain" id="PRO_5003012536" description="RxLR effector protein PITG_19617">
    <location>
        <begin position="22"/>
        <end position="118"/>
    </location>
</feature>
<feature type="short sequence motif" description="RxLR-dEER" evidence="7">
    <location>
        <begin position="50"/>
        <end position="64"/>
    </location>
</feature>
<sequence>MRAVYILAMACAATLQASSSALPSTKDLNSQVESLVPSDITDSAHVGGVRLLRVEDKEEETEEERGFGGALADGLKKLNPAKAAKKAKEKAAKIKQDLKEIGEHAAWLEKMRETIGKD</sequence>